<gene>
    <name evidence="1" type="primary">adk</name>
    <name type="ordered locus">Achl_2667</name>
</gene>
<evidence type="ECO:0000255" key="1">
    <source>
        <dbReference type="HAMAP-Rule" id="MF_00235"/>
    </source>
</evidence>
<name>KAD_PSECP</name>
<dbReference type="EC" id="2.7.4.3" evidence="1"/>
<dbReference type="EMBL" id="CP001341">
    <property type="protein sequence ID" value="ACL40632.1"/>
    <property type="molecule type" value="Genomic_DNA"/>
</dbReference>
<dbReference type="SMR" id="B8HCY6"/>
<dbReference type="STRING" id="452863.Achl_2667"/>
<dbReference type="KEGG" id="ach:Achl_2667"/>
<dbReference type="eggNOG" id="COG0563">
    <property type="taxonomic scope" value="Bacteria"/>
</dbReference>
<dbReference type="HOGENOM" id="CLU_032354_4_1_11"/>
<dbReference type="OrthoDB" id="9805030at2"/>
<dbReference type="UniPathway" id="UPA00588">
    <property type="reaction ID" value="UER00649"/>
</dbReference>
<dbReference type="Proteomes" id="UP000002505">
    <property type="component" value="Chromosome"/>
</dbReference>
<dbReference type="GO" id="GO:0005737">
    <property type="term" value="C:cytoplasm"/>
    <property type="evidence" value="ECO:0007669"/>
    <property type="project" value="UniProtKB-SubCell"/>
</dbReference>
<dbReference type="GO" id="GO:0004017">
    <property type="term" value="F:adenylate kinase activity"/>
    <property type="evidence" value="ECO:0007669"/>
    <property type="project" value="UniProtKB-UniRule"/>
</dbReference>
<dbReference type="GO" id="GO:0005524">
    <property type="term" value="F:ATP binding"/>
    <property type="evidence" value="ECO:0007669"/>
    <property type="project" value="UniProtKB-UniRule"/>
</dbReference>
<dbReference type="GO" id="GO:0044209">
    <property type="term" value="P:AMP salvage"/>
    <property type="evidence" value="ECO:0007669"/>
    <property type="project" value="UniProtKB-UniRule"/>
</dbReference>
<dbReference type="CDD" id="cd01428">
    <property type="entry name" value="ADK"/>
    <property type="match status" value="1"/>
</dbReference>
<dbReference type="Gene3D" id="3.40.50.300">
    <property type="entry name" value="P-loop containing nucleotide triphosphate hydrolases"/>
    <property type="match status" value="1"/>
</dbReference>
<dbReference type="HAMAP" id="MF_00235">
    <property type="entry name" value="Adenylate_kinase_Adk"/>
    <property type="match status" value="1"/>
</dbReference>
<dbReference type="InterPro" id="IPR006259">
    <property type="entry name" value="Adenyl_kin_sub"/>
</dbReference>
<dbReference type="InterPro" id="IPR000850">
    <property type="entry name" value="Adenylat/UMP-CMP_kin"/>
</dbReference>
<dbReference type="InterPro" id="IPR033690">
    <property type="entry name" value="Adenylat_kinase_CS"/>
</dbReference>
<dbReference type="InterPro" id="IPR027417">
    <property type="entry name" value="P-loop_NTPase"/>
</dbReference>
<dbReference type="NCBIfam" id="TIGR01351">
    <property type="entry name" value="adk"/>
    <property type="match status" value="1"/>
</dbReference>
<dbReference type="NCBIfam" id="NF001381">
    <property type="entry name" value="PRK00279.1-3"/>
    <property type="match status" value="1"/>
</dbReference>
<dbReference type="NCBIfam" id="NF011100">
    <property type="entry name" value="PRK14527.1"/>
    <property type="match status" value="1"/>
</dbReference>
<dbReference type="NCBIfam" id="NF011101">
    <property type="entry name" value="PRK14528.1"/>
    <property type="match status" value="1"/>
</dbReference>
<dbReference type="NCBIfam" id="NF011104">
    <property type="entry name" value="PRK14531.1"/>
    <property type="match status" value="1"/>
</dbReference>
<dbReference type="NCBIfam" id="NF011105">
    <property type="entry name" value="PRK14532.1"/>
    <property type="match status" value="1"/>
</dbReference>
<dbReference type="PANTHER" id="PTHR23359">
    <property type="entry name" value="NUCLEOTIDE KINASE"/>
    <property type="match status" value="1"/>
</dbReference>
<dbReference type="Pfam" id="PF00406">
    <property type="entry name" value="ADK"/>
    <property type="match status" value="1"/>
</dbReference>
<dbReference type="PRINTS" id="PR00094">
    <property type="entry name" value="ADENYLTKNASE"/>
</dbReference>
<dbReference type="SUPFAM" id="SSF52540">
    <property type="entry name" value="P-loop containing nucleoside triphosphate hydrolases"/>
    <property type="match status" value="1"/>
</dbReference>
<dbReference type="PROSITE" id="PS00113">
    <property type="entry name" value="ADENYLATE_KINASE"/>
    <property type="match status" value="1"/>
</dbReference>
<accession>B8HCY6</accession>
<reference key="1">
    <citation type="submission" date="2009-01" db="EMBL/GenBank/DDBJ databases">
        <title>Complete sequence of chromosome of Arthrobacter chlorophenolicus A6.</title>
        <authorList>
            <consortium name="US DOE Joint Genome Institute"/>
            <person name="Lucas S."/>
            <person name="Copeland A."/>
            <person name="Lapidus A."/>
            <person name="Glavina del Rio T."/>
            <person name="Tice H."/>
            <person name="Bruce D."/>
            <person name="Goodwin L."/>
            <person name="Pitluck S."/>
            <person name="Goltsman E."/>
            <person name="Clum A."/>
            <person name="Larimer F."/>
            <person name="Land M."/>
            <person name="Hauser L."/>
            <person name="Kyrpides N."/>
            <person name="Mikhailova N."/>
            <person name="Jansson J."/>
            <person name="Richardson P."/>
        </authorList>
    </citation>
    <scope>NUCLEOTIDE SEQUENCE [LARGE SCALE GENOMIC DNA]</scope>
    <source>
        <strain>ATCC 700700 / DSM 12829 / CIP 107037 / JCM 12360 / KCTC 9906 / NCIMB 13794 / A6</strain>
    </source>
</reference>
<comment type="function">
    <text evidence="1">Catalyzes the reversible transfer of the terminal phosphate group between ATP and AMP. Plays an important role in cellular energy homeostasis and in adenine nucleotide metabolism.</text>
</comment>
<comment type="catalytic activity">
    <reaction evidence="1">
        <text>AMP + ATP = 2 ADP</text>
        <dbReference type="Rhea" id="RHEA:12973"/>
        <dbReference type="ChEBI" id="CHEBI:30616"/>
        <dbReference type="ChEBI" id="CHEBI:456215"/>
        <dbReference type="ChEBI" id="CHEBI:456216"/>
        <dbReference type="EC" id="2.7.4.3"/>
    </reaction>
</comment>
<comment type="pathway">
    <text evidence="1">Purine metabolism; AMP biosynthesis via salvage pathway; AMP from ADP: step 1/1.</text>
</comment>
<comment type="subunit">
    <text evidence="1">Monomer.</text>
</comment>
<comment type="subcellular location">
    <subcellularLocation>
        <location evidence="1">Cytoplasm</location>
    </subcellularLocation>
</comment>
<comment type="domain">
    <text evidence="1">Consists of three domains, a large central CORE domain and two small peripheral domains, NMPbind and LID, which undergo movements during catalysis. The LID domain closes over the site of phosphoryl transfer upon ATP binding. Assembling and dissambling the active center during each catalytic cycle provides an effective means to prevent ATP hydrolysis.</text>
</comment>
<comment type="similarity">
    <text evidence="1">Belongs to the adenylate kinase family.</text>
</comment>
<protein>
    <recommendedName>
        <fullName evidence="1">Adenylate kinase</fullName>
        <shortName evidence="1">AK</shortName>
        <ecNumber evidence="1">2.7.4.3</ecNumber>
    </recommendedName>
    <alternativeName>
        <fullName evidence="1">ATP-AMP transphosphorylase</fullName>
    </alternativeName>
    <alternativeName>
        <fullName evidence="1">ATP:AMP phosphotransferase</fullName>
    </alternativeName>
    <alternativeName>
        <fullName evidence="1">Adenylate monophosphate kinase</fullName>
    </alternativeName>
</protein>
<feature type="chain" id="PRO_1000204398" description="Adenylate kinase">
    <location>
        <begin position="1"/>
        <end position="192"/>
    </location>
</feature>
<feature type="region of interest" description="NMP" evidence="1">
    <location>
        <begin position="31"/>
        <end position="60"/>
    </location>
</feature>
<feature type="region of interest" description="LID" evidence="1">
    <location>
        <begin position="127"/>
        <end position="137"/>
    </location>
</feature>
<feature type="binding site" evidence="1">
    <location>
        <begin position="11"/>
        <end position="16"/>
    </location>
    <ligand>
        <name>ATP</name>
        <dbReference type="ChEBI" id="CHEBI:30616"/>
    </ligand>
</feature>
<feature type="binding site" evidence="1">
    <location>
        <position position="32"/>
    </location>
    <ligand>
        <name>AMP</name>
        <dbReference type="ChEBI" id="CHEBI:456215"/>
    </ligand>
</feature>
<feature type="binding site" evidence="1">
    <location>
        <position position="37"/>
    </location>
    <ligand>
        <name>AMP</name>
        <dbReference type="ChEBI" id="CHEBI:456215"/>
    </ligand>
</feature>
<feature type="binding site" evidence="1">
    <location>
        <begin position="58"/>
        <end position="60"/>
    </location>
    <ligand>
        <name>AMP</name>
        <dbReference type="ChEBI" id="CHEBI:456215"/>
    </ligand>
</feature>
<feature type="binding site" evidence="1">
    <location>
        <begin position="86"/>
        <end position="89"/>
    </location>
    <ligand>
        <name>AMP</name>
        <dbReference type="ChEBI" id="CHEBI:456215"/>
    </ligand>
</feature>
<feature type="binding site" evidence="1">
    <location>
        <position position="93"/>
    </location>
    <ligand>
        <name>AMP</name>
        <dbReference type="ChEBI" id="CHEBI:456215"/>
    </ligand>
</feature>
<feature type="binding site" evidence="1">
    <location>
        <position position="128"/>
    </location>
    <ligand>
        <name>ATP</name>
        <dbReference type="ChEBI" id="CHEBI:30616"/>
    </ligand>
</feature>
<feature type="binding site" evidence="1">
    <location>
        <position position="134"/>
    </location>
    <ligand>
        <name>AMP</name>
        <dbReference type="ChEBI" id="CHEBI:456215"/>
    </ligand>
</feature>
<feature type="binding site" evidence="1">
    <location>
        <position position="145"/>
    </location>
    <ligand>
        <name>AMP</name>
        <dbReference type="ChEBI" id="CHEBI:456215"/>
    </ligand>
</feature>
<feature type="binding site" evidence="1">
    <location>
        <position position="173"/>
    </location>
    <ligand>
        <name>ATP</name>
        <dbReference type="ChEBI" id="CHEBI:30616"/>
    </ligand>
</feature>
<organism>
    <name type="scientific">Pseudarthrobacter chlorophenolicus (strain ATCC 700700 / DSM 12829 / CIP 107037 / JCM 12360 / KCTC 9906 / NCIMB 13794 / A6)</name>
    <name type="common">Arthrobacter chlorophenolicus</name>
    <dbReference type="NCBI Taxonomy" id="452863"/>
    <lineage>
        <taxon>Bacteria</taxon>
        <taxon>Bacillati</taxon>
        <taxon>Actinomycetota</taxon>
        <taxon>Actinomycetes</taxon>
        <taxon>Micrococcales</taxon>
        <taxon>Micrococcaceae</taxon>
        <taxon>Pseudarthrobacter</taxon>
    </lineage>
</organism>
<proteinExistence type="inferred from homology"/>
<keyword id="KW-0067">ATP-binding</keyword>
<keyword id="KW-0963">Cytoplasm</keyword>
<keyword id="KW-0418">Kinase</keyword>
<keyword id="KW-0545">Nucleotide biosynthesis</keyword>
<keyword id="KW-0547">Nucleotide-binding</keyword>
<keyword id="KW-0808">Transferase</keyword>
<sequence>MTRMLIIGPPGSGKGTQAERISERLGVVAISTGDIFRANVKGETPLGIEAKKYMDNGDFVPDSVTNKMVRDRLSESDVESGFLLDGYPRTTAQVDYLDEILAKNEEKLDVVLQLTADDEELVHRLLGRAKETGRSDDNEAVIRHRLDLYHEQTEAVVAKYAERGILTQVDGIGPIDEVTDRVMQAIKAAQAA</sequence>